<sequence>MSEKYVVTWDMLQIHARKLASRLLPVEQWKGIIAVSRGGLVPGALLARELGIRHVDTVCISSYDHDNQRELKVLKRAEGDGEGFIVIDDLVDTGGTAVAIREMYPKAHFVTIFAKPAGRPLVDDYVVDIPQDTWIEQPWDMGVVFVPPIAGR</sequence>
<keyword id="KW-0997">Cell inner membrane</keyword>
<keyword id="KW-1003">Cell membrane</keyword>
<keyword id="KW-0328">Glycosyltransferase</keyword>
<keyword id="KW-0460">Magnesium</keyword>
<keyword id="KW-0472">Membrane</keyword>
<keyword id="KW-0479">Metal-binding</keyword>
<keyword id="KW-0660">Purine salvage</keyword>
<keyword id="KW-0808">Transferase</keyword>
<gene>
    <name evidence="1" type="primary">gpt</name>
    <name type="ordered locus">KPN78578_02420</name>
    <name type="ORF">KPN_00250</name>
</gene>
<protein>
    <recommendedName>
        <fullName evidence="1">Xanthine-guanine phosphoribosyltransferase</fullName>
        <shortName evidence="1">XGPRT</shortName>
        <ecNumber evidence="1">2.4.2.-</ecNumber>
        <ecNumber evidence="1">2.4.2.22</ecNumber>
    </recommendedName>
    <alternativeName>
        <fullName evidence="1">Xanthine phosphoribosyltransferase</fullName>
    </alternativeName>
</protein>
<proteinExistence type="inferred from homology"/>
<accession>A6T532</accession>
<name>XGPT_KLEP7</name>
<evidence type="ECO:0000255" key="1">
    <source>
        <dbReference type="HAMAP-Rule" id="MF_01903"/>
    </source>
</evidence>
<dbReference type="EC" id="2.4.2.-" evidence="1"/>
<dbReference type="EC" id="2.4.2.22" evidence="1"/>
<dbReference type="EMBL" id="CP000647">
    <property type="protein sequence ID" value="ABR75703.1"/>
    <property type="molecule type" value="Genomic_DNA"/>
</dbReference>
<dbReference type="RefSeq" id="WP_002889733.1">
    <property type="nucleotide sequence ID" value="NC_009648.1"/>
</dbReference>
<dbReference type="SMR" id="A6T532"/>
<dbReference type="STRING" id="272620.KPN_00250"/>
<dbReference type="jPOST" id="A6T532"/>
<dbReference type="PaxDb" id="272620-KPN_00250"/>
<dbReference type="EnsemblBacteria" id="ABR75703">
    <property type="protein sequence ID" value="ABR75703"/>
    <property type="gene ID" value="KPN_00250"/>
</dbReference>
<dbReference type="GeneID" id="93310574"/>
<dbReference type="KEGG" id="kpn:KPN_00250"/>
<dbReference type="HOGENOM" id="CLU_080904_3_0_6"/>
<dbReference type="UniPathway" id="UPA00602">
    <property type="reaction ID" value="UER00658"/>
</dbReference>
<dbReference type="UniPathway" id="UPA00909">
    <property type="reaction ID" value="UER00887"/>
</dbReference>
<dbReference type="Proteomes" id="UP000000265">
    <property type="component" value="Chromosome"/>
</dbReference>
<dbReference type="GO" id="GO:0005829">
    <property type="term" value="C:cytosol"/>
    <property type="evidence" value="ECO:0007669"/>
    <property type="project" value="TreeGrafter"/>
</dbReference>
<dbReference type="GO" id="GO:0005886">
    <property type="term" value="C:plasma membrane"/>
    <property type="evidence" value="ECO:0007669"/>
    <property type="project" value="UniProtKB-SubCell"/>
</dbReference>
<dbReference type="GO" id="GO:0052657">
    <property type="term" value="F:guanine phosphoribosyltransferase activity"/>
    <property type="evidence" value="ECO:0007669"/>
    <property type="project" value="RHEA"/>
</dbReference>
<dbReference type="GO" id="GO:0004422">
    <property type="term" value="F:hypoxanthine phosphoribosyltransferase activity"/>
    <property type="evidence" value="ECO:0007669"/>
    <property type="project" value="TreeGrafter"/>
</dbReference>
<dbReference type="GO" id="GO:0000287">
    <property type="term" value="F:magnesium ion binding"/>
    <property type="evidence" value="ECO:0007669"/>
    <property type="project" value="UniProtKB-UniRule"/>
</dbReference>
<dbReference type="GO" id="GO:0000310">
    <property type="term" value="F:xanthine phosphoribosyltransferase activity"/>
    <property type="evidence" value="ECO:0007669"/>
    <property type="project" value="UniProtKB-UniRule"/>
</dbReference>
<dbReference type="GO" id="GO:0032263">
    <property type="term" value="P:GMP salvage"/>
    <property type="evidence" value="ECO:0007669"/>
    <property type="project" value="UniProtKB-UniRule"/>
</dbReference>
<dbReference type="GO" id="GO:0032264">
    <property type="term" value="P:IMP salvage"/>
    <property type="evidence" value="ECO:0007669"/>
    <property type="project" value="TreeGrafter"/>
</dbReference>
<dbReference type="GO" id="GO:0006166">
    <property type="term" value="P:purine ribonucleoside salvage"/>
    <property type="evidence" value="ECO:0007669"/>
    <property type="project" value="UniProtKB-KW"/>
</dbReference>
<dbReference type="GO" id="GO:0032265">
    <property type="term" value="P:XMP salvage"/>
    <property type="evidence" value="ECO:0007669"/>
    <property type="project" value="UniProtKB-UniRule"/>
</dbReference>
<dbReference type="CDD" id="cd06223">
    <property type="entry name" value="PRTases_typeI"/>
    <property type="match status" value="1"/>
</dbReference>
<dbReference type="FunFam" id="3.40.50.2020:FF:000009">
    <property type="entry name" value="Xanthine phosphoribosyltransferase"/>
    <property type="match status" value="1"/>
</dbReference>
<dbReference type="Gene3D" id="3.40.50.2020">
    <property type="match status" value="1"/>
</dbReference>
<dbReference type="HAMAP" id="MF_01903">
    <property type="entry name" value="XGPRT"/>
    <property type="match status" value="1"/>
</dbReference>
<dbReference type="InterPro" id="IPR000836">
    <property type="entry name" value="PRibTrfase_dom"/>
</dbReference>
<dbReference type="InterPro" id="IPR029057">
    <property type="entry name" value="PRTase-like"/>
</dbReference>
<dbReference type="InterPro" id="IPR023747">
    <property type="entry name" value="Xanthine_Guanine_PRibTrfase"/>
</dbReference>
<dbReference type="NCBIfam" id="NF006613">
    <property type="entry name" value="PRK09177.1"/>
    <property type="match status" value="1"/>
</dbReference>
<dbReference type="PANTHER" id="PTHR39563">
    <property type="entry name" value="XANTHINE PHOSPHORIBOSYLTRANSFERASE"/>
    <property type="match status" value="1"/>
</dbReference>
<dbReference type="PANTHER" id="PTHR39563:SF1">
    <property type="entry name" value="XANTHINE-GUANINE PHOSPHORIBOSYLTRANSFERASE"/>
    <property type="match status" value="1"/>
</dbReference>
<dbReference type="Pfam" id="PF00156">
    <property type="entry name" value="Pribosyltran"/>
    <property type="match status" value="1"/>
</dbReference>
<dbReference type="SUPFAM" id="SSF53271">
    <property type="entry name" value="PRTase-like"/>
    <property type="match status" value="1"/>
</dbReference>
<dbReference type="PROSITE" id="PS00103">
    <property type="entry name" value="PUR_PYR_PR_TRANSFER"/>
    <property type="match status" value="1"/>
</dbReference>
<reference key="1">
    <citation type="submission" date="2006-09" db="EMBL/GenBank/DDBJ databases">
        <authorList>
            <consortium name="The Klebsiella pneumonia Genome Sequencing Project"/>
            <person name="McClelland M."/>
            <person name="Sanderson E.K."/>
            <person name="Spieth J."/>
            <person name="Clifton W.S."/>
            <person name="Latreille P."/>
            <person name="Sabo A."/>
            <person name="Pepin K."/>
            <person name="Bhonagiri V."/>
            <person name="Porwollik S."/>
            <person name="Ali J."/>
            <person name="Wilson R.K."/>
        </authorList>
    </citation>
    <scope>NUCLEOTIDE SEQUENCE [LARGE SCALE GENOMIC DNA]</scope>
    <source>
        <strain>ATCC 700721 / MGH 78578</strain>
    </source>
</reference>
<organism>
    <name type="scientific">Klebsiella pneumoniae subsp. pneumoniae (strain ATCC 700721 / MGH 78578)</name>
    <dbReference type="NCBI Taxonomy" id="272620"/>
    <lineage>
        <taxon>Bacteria</taxon>
        <taxon>Pseudomonadati</taxon>
        <taxon>Pseudomonadota</taxon>
        <taxon>Gammaproteobacteria</taxon>
        <taxon>Enterobacterales</taxon>
        <taxon>Enterobacteriaceae</taxon>
        <taxon>Klebsiella/Raoultella group</taxon>
        <taxon>Klebsiella</taxon>
        <taxon>Klebsiella pneumoniae complex</taxon>
    </lineage>
</organism>
<feature type="chain" id="PRO_1000070610" description="Xanthine-guanine phosphoribosyltransferase">
    <location>
        <begin position="1"/>
        <end position="152"/>
    </location>
</feature>
<feature type="binding site" evidence="1">
    <location>
        <begin position="37"/>
        <end position="38"/>
    </location>
    <ligand>
        <name>5-phospho-alpha-D-ribose 1-diphosphate</name>
        <dbReference type="ChEBI" id="CHEBI:58017"/>
    </ligand>
</feature>
<feature type="binding site" evidence="1">
    <location>
        <position position="69"/>
    </location>
    <ligand>
        <name>5-phospho-alpha-D-ribose 1-diphosphate</name>
        <dbReference type="ChEBI" id="CHEBI:58017"/>
    </ligand>
</feature>
<feature type="binding site" evidence="1">
    <location>
        <position position="69"/>
    </location>
    <ligand>
        <name>GMP</name>
        <dbReference type="ChEBI" id="CHEBI:58115"/>
    </ligand>
</feature>
<feature type="binding site" evidence="1">
    <location>
        <begin position="88"/>
        <end position="96"/>
    </location>
    <ligand>
        <name>5-phospho-alpha-D-ribose 1-diphosphate</name>
        <dbReference type="ChEBI" id="CHEBI:58017"/>
    </ligand>
</feature>
<feature type="binding site" evidence="1">
    <location>
        <position position="89"/>
    </location>
    <ligand>
        <name>Mg(2+)</name>
        <dbReference type="ChEBI" id="CHEBI:18420"/>
    </ligand>
</feature>
<feature type="binding site" evidence="1">
    <location>
        <begin position="92"/>
        <end position="96"/>
    </location>
    <ligand>
        <name>GMP</name>
        <dbReference type="ChEBI" id="CHEBI:58115"/>
    </ligand>
</feature>
<feature type="binding site" evidence="1">
    <location>
        <position position="92"/>
    </location>
    <ligand>
        <name>guanine</name>
        <dbReference type="ChEBI" id="CHEBI:16235"/>
    </ligand>
</feature>
<feature type="binding site" evidence="1">
    <location>
        <position position="92"/>
    </location>
    <ligand>
        <name>xanthine</name>
        <dbReference type="ChEBI" id="CHEBI:17712"/>
    </ligand>
</feature>
<feature type="binding site" evidence="1">
    <location>
        <begin position="134"/>
        <end position="135"/>
    </location>
    <ligand>
        <name>GMP</name>
        <dbReference type="ChEBI" id="CHEBI:58115"/>
    </ligand>
</feature>
<feature type="binding site" evidence="1">
    <location>
        <position position="135"/>
    </location>
    <ligand>
        <name>guanine</name>
        <dbReference type="ChEBI" id="CHEBI:16235"/>
    </ligand>
</feature>
<feature type="binding site" evidence="1">
    <location>
        <position position="135"/>
    </location>
    <ligand>
        <name>xanthine</name>
        <dbReference type="ChEBI" id="CHEBI:17712"/>
    </ligand>
</feature>
<comment type="function">
    <text evidence="1">Purine salvage pathway enzyme that catalyzes the transfer of the ribosyl-5-phosphate group from 5-phospho-alpha-D-ribose 1-diphosphate (PRPP) to the N9 position of the 6-oxopurines guanine and xanthine to form the corresponding ribonucleotides GMP (guanosine 5'-monophosphate) and XMP (xanthosine 5'-monophosphate), with the release of PPi. To a lesser extent, also acts on hypoxanthine.</text>
</comment>
<comment type="catalytic activity">
    <reaction evidence="1">
        <text>GMP + diphosphate = guanine + 5-phospho-alpha-D-ribose 1-diphosphate</text>
        <dbReference type="Rhea" id="RHEA:25424"/>
        <dbReference type="ChEBI" id="CHEBI:16235"/>
        <dbReference type="ChEBI" id="CHEBI:33019"/>
        <dbReference type="ChEBI" id="CHEBI:58017"/>
        <dbReference type="ChEBI" id="CHEBI:58115"/>
    </reaction>
    <physiologicalReaction direction="right-to-left" evidence="1">
        <dbReference type="Rhea" id="RHEA:25426"/>
    </physiologicalReaction>
</comment>
<comment type="catalytic activity">
    <reaction evidence="1">
        <text>XMP + diphosphate = xanthine + 5-phospho-alpha-D-ribose 1-diphosphate</text>
        <dbReference type="Rhea" id="RHEA:10800"/>
        <dbReference type="ChEBI" id="CHEBI:17712"/>
        <dbReference type="ChEBI" id="CHEBI:33019"/>
        <dbReference type="ChEBI" id="CHEBI:57464"/>
        <dbReference type="ChEBI" id="CHEBI:58017"/>
        <dbReference type="EC" id="2.4.2.22"/>
    </reaction>
    <physiologicalReaction direction="right-to-left" evidence="1">
        <dbReference type="Rhea" id="RHEA:10802"/>
    </physiologicalReaction>
</comment>
<comment type="catalytic activity">
    <reaction evidence="1">
        <text>IMP + diphosphate = hypoxanthine + 5-phospho-alpha-D-ribose 1-diphosphate</text>
        <dbReference type="Rhea" id="RHEA:17973"/>
        <dbReference type="ChEBI" id="CHEBI:17368"/>
        <dbReference type="ChEBI" id="CHEBI:33019"/>
        <dbReference type="ChEBI" id="CHEBI:58017"/>
        <dbReference type="ChEBI" id="CHEBI:58053"/>
    </reaction>
    <physiologicalReaction direction="right-to-left" evidence="1">
        <dbReference type="Rhea" id="RHEA:17975"/>
    </physiologicalReaction>
</comment>
<comment type="cofactor">
    <cofactor evidence="1">
        <name>Mg(2+)</name>
        <dbReference type="ChEBI" id="CHEBI:18420"/>
    </cofactor>
</comment>
<comment type="pathway">
    <text evidence="1">Purine metabolism; GMP biosynthesis via salvage pathway; GMP from guanine: step 1/1.</text>
</comment>
<comment type="pathway">
    <text evidence="1">Purine metabolism; XMP biosynthesis via salvage pathway; XMP from xanthine: step 1/1.</text>
</comment>
<comment type="subunit">
    <text evidence="1">Homotetramer.</text>
</comment>
<comment type="subcellular location">
    <subcellularLocation>
        <location evidence="1">Cell inner membrane</location>
        <topology evidence="1">Peripheral membrane protein</topology>
    </subcellularLocation>
</comment>
<comment type="similarity">
    <text evidence="1">Belongs to the purine/pyrimidine phosphoribosyltransferase family. XGPT subfamily.</text>
</comment>